<proteinExistence type="inferred from homology"/>
<name>YCF70_SACOF</name>
<sequence>MVLYALFYVFLVLFIFFDSFKQESNKLELSGKEERKLGNGGDRLTRDFLDPLYEEFEESSSESSDVNFHQVNLSIRICFSF</sequence>
<comment type="subcellular location">
    <subcellularLocation>
        <location>Plastid</location>
        <location>Chloroplast</location>
    </subcellularLocation>
</comment>
<comment type="similarity">
    <text evidence="1">Belongs to the ycf70 family.</text>
</comment>
<keyword id="KW-0150">Chloroplast</keyword>
<keyword id="KW-0934">Plastid</keyword>
<accession>Q6ENX7</accession>
<feature type="chain" id="PRO_0000299583" description="Uncharacterized protein ycf70">
    <location>
        <begin position="1"/>
        <end position="81"/>
    </location>
</feature>
<evidence type="ECO:0000305" key="1"/>
<protein>
    <recommendedName>
        <fullName>Uncharacterized protein ycf70</fullName>
    </recommendedName>
    <alternativeName>
        <fullName>ORF81</fullName>
    </alternativeName>
</protein>
<reference key="1">
    <citation type="journal article" date="2004" name="DNA Res.">
        <title>Complete nucleotide sequence of the sugarcane (Saccharum officinarum) chloroplast genome: a comparative analysis of four monocot chloroplast genomes.</title>
        <authorList>
            <person name="Asano T."/>
            <person name="Tsudzuki T."/>
            <person name="Takahashi S."/>
            <person name="Shimada H."/>
            <person name="Kadowaki K."/>
        </authorList>
    </citation>
    <scope>NUCLEOTIDE SEQUENCE [LARGE SCALE GENOMIC DNA]</scope>
</reference>
<dbReference type="EMBL" id="AP006714">
    <property type="protein sequence ID" value="BAD27279.1"/>
    <property type="molecule type" value="Genomic_DNA"/>
</dbReference>
<dbReference type="SMR" id="Q6ENX7"/>
<dbReference type="GO" id="GO:0009507">
    <property type="term" value="C:chloroplast"/>
    <property type="evidence" value="ECO:0007669"/>
    <property type="project" value="UniProtKB-SubCell"/>
</dbReference>
<dbReference type="InterPro" id="IPR035337">
    <property type="entry name" value="Ycf70-like"/>
</dbReference>
<dbReference type="Pfam" id="PF17382">
    <property type="entry name" value="Ycf70"/>
    <property type="match status" value="1"/>
</dbReference>
<gene>
    <name type="primary">orf81</name>
</gene>
<organism>
    <name type="scientific">Saccharum officinarum</name>
    <name type="common">Sugarcane</name>
    <dbReference type="NCBI Taxonomy" id="4547"/>
    <lineage>
        <taxon>Eukaryota</taxon>
        <taxon>Viridiplantae</taxon>
        <taxon>Streptophyta</taxon>
        <taxon>Embryophyta</taxon>
        <taxon>Tracheophyta</taxon>
        <taxon>Spermatophyta</taxon>
        <taxon>Magnoliopsida</taxon>
        <taxon>Liliopsida</taxon>
        <taxon>Poales</taxon>
        <taxon>Poaceae</taxon>
        <taxon>PACMAD clade</taxon>
        <taxon>Panicoideae</taxon>
        <taxon>Andropogonodae</taxon>
        <taxon>Andropogoneae</taxon>
        <taxon>Saccharinae</taxon>
        <taxon>Saccharum</taxon>
        <taxon>Saccharum officinarum species complex</taxon>
    </lineage>
</organism>
<geneLocation type="chloroplast"/>